<organism>
    <name type="scientific">Thermus thermophilus</name>
    <dbReference type="NCBI Taxonomy" id="274"/>
    <lineage>
        <taxon>Bacteria</taxon>
        <taxon>Thermotogati</taxon>
        <taxon>Deinococcota</taxon>
        <taxon>Deinococci</taxon>
        <taxon>Thermales</taxon>
        <taxon>Thermaceae</taxon>
        <taxon>Thermus</taxon>
    </lineage>
</organism>
<evidence type="ECO:0000305" key="1"/>
<evidence type="ECO:0007829" key="2">
    <source>
        <dbReference type="PDB" id="1B70"/>
    </source>
</evidence>
<evidence type="ECO:0007829" key="3">
    <source>
        <dbReference type="PDB" id="1B7Y"/>
    </source>
</evidence>
<evidence type="ECO:0007829" key="4">
    <source>
        <dbReference type="PDB" id="3TEH"/>
    </source>
</evidence>
<comment type="catalytic activity">
    <reaction>
        <text>tRNA(Phe) + L-phenylalanine + ATP = L-phenylalanyl-tRNA(Phe) + AMP + diphosphate + H(+)</text>
        <dbReference type="Rhea" id="RHEA:19413"/>
        <dbReference type="Rhea" id="RHEA-COMP:9668"/>
        <dbReference type="Rhea" id="RHEA-COMP:9699"/>
        <dbReference type="ChEBI" id="CHEBI:15378"/>
        <dbReference type="ChEBI" id="CHEBI:30616"/>
        <dbReference type="ChEBI" id="CHEBI:33019"/>
        <dbReference type="ChEBI" id="CHEBI:58095"/>
        <dbReference type="ChEBI" id="CHEBI:78442"/>
        <dbReference type="ChEBI" id="CHEBI:78531"/>
        <dbReference type="ChEBI" id="CHEBI:456215"/>
        <dbReference type="EC" id="6.1.1.20"/>
    </reaction>
</comment>
<comment type="cofactor">
    <cofactor>
        <name>Mg(2+)</name>
        <dbReference type="ChEBI" id="CHEBI:18420"/>
    </cofactor>
    <text>Binds 2 magnesium ions per tetramer.</text>
</comment>
<comment type="subunit">
    <text>Tetramer of two alpha and two beta subunits.</text>
</comment>
<comment type="subcellular location">
    <subcellularLocation>
        <location>Cytoplasm</location>
    </subcellularLocation>
</comment>
<comment type="similarity">
    <text evidence="1">Belongs to the phenylalanyl-tRNA synthetase beta subunit family. Type 1 subfamily.</text>
</comment>
<comment type="caution">
    <text evidence="1">The sequence shown here has been extracted from PDB entry 1B70.</text>
</comment>
<dbReference type="EC" id="6.1.1.20"/>
<dbReference type="RefSeq" id="WP_011229047.1">
    <property type="nucleotide sequence ID" value="NZ_DFSU01000029.1"/>
</dbReference>
<dbReference type="PDB" id="1B70">
    <property type="method" value="X-ray"/>
    <property type="resolution" value="2.70 A"/>
    <property type="chains" value="B=1-785"/>
</dbReference>
<dbReference type="PDB" id="1B7Y">
    <property type="method" value="X-ray"/>
    <property type="resolution" value="2.50 A"/>
    <property type="chains" value="B=1-785"/>
</dbReference>
<dbReference type="PDB" id="2AKW">
    <property type="method" value="X-ray"/>
    <property type="resolution" value="2.80 A"/>
    <property type="chains" value="B=1-785"/>
</dbReference>
<dbReference type="PDB" id="2ALY">
    <property type="method" value="X-ray"/>
    <property type="resolution" value="2.60 A"/>
    <property type="chains" value="B=1-785"/>
</dbReference>
<dbReference type="PDB" id="2AMC">
    <property type="method" value="X-ray"/>
    <property type="resolution" value="2.70 A"/>
    <property type="chains" value="B=1-785"/>
</dbReference>
<dbReference type="PDB" id="2IY5">
    <property type="method" value="X-ray"/>
    <property type="resolution" value="3.10 A"/>
    <property type="chains" value="B=1-785"/>
</dbReference>
<dbReference type="PDB" id="3TEH">
    <property type="method" value="X-ray"/>
    <property type="resolution" value="2.85 A"/>
    <property type="chains" value="B=1-785"/>
</dbReference>
<dbReference type="PDB" id="4TVA">
    <property type="method" value="X-ray"/>
    <property type="resolution" value="2.60 A"/>
    <property type="chains" value="B=1-785"/>
</dbReference>
<dbReference type="PDBsum" id="1B70"/>
<dbReference type="PDBsum" id="1B7Y"/>
<dbReference type="PDBsum" id="2AKW"/>
<dbReference type="PDBsum" id="2ALY"/>
<dbReference type="PDBsum" id="2AMC"/>
<dbReference type="PDBsum" id="2IY5"/>
<dbReference type="PDBsum" id="3TEH"/>
<dbReference type="PDBsum" id="4TVA"/>
<dbReference type="SMR" id="P27002"/>
<dbReference type="DIP" id="DIP-6105N"/>
<dbReference type="MINT" id="P27002"/>
<dbReference type="GeneID" id="3169713"/>
<dbReference type="EvolutionaryTrace" id="P27002"/>
<dbReference type="GO" id="GO:0009328">
    <property type="term" value="C:phenylalanine-tRNA ligase complex"/>
    <property type="evidence" value="ECO:0007669"/>
    <property type="project" value="TreeGrafter"/>
</dbReference>
<dbReference type="GO" id="GO:0005524">
    <property type="term" value="F:ATP binding"/>
    <property type="evidence" value="ECO:0007669"/>
    <property type="project" value="UniProtKB-UniRule"/>
</dbReference>
<dbReference type="GO" id="GO:0000287">
    <property type="term" value="F:magnesium ion binding"/>
    <property type="evidence" value="ECO:0007669"/>
    <property type="project" value="UniProtKB-UniRule"/>
</dbReference>
<dbReference type="GO" id="GO:0004826">
    <property type="term" value="F:phenylalanine-tRNA ligase activity"/>
    <property type="evidence" value="ECO:0007669"/>
    <property type="project" value="UniProtKB-UniRule"/>
</dbReference>
<dbReference type="GO" id="GO:0000049">
    <property type="term" value="F:tRNA binding"/>
    <property type="evidence" value="ECO:0007669"/>
    <property type="project" value="UniProtKB-KW"/>
</dbReference>
<dbReference type="GO" id="GO:0006432">
    <property type="term" value="P:phenylalanyl-tRNA aminoacylation"/>
    <property type="evidence" value="ECO:0007669"/>
    <property type="project" value="UniProtKB-UniRule"/>
</dbReference>
<dbReference type="CDD" id="cd00769">
    <property type="entry name" value="PheRS_beta_core"/>
    <property type="match status" value="1"/>
</dbReference>
<dbReference type="CDD" id="cd02796">
    <property type="entry name" value="tRNA_bind_bactPheRS"/>
    <property type="match status" value="1"/>
</dbReference>
<dbReference type="FunFam" id="3.30.56.10:FF:000002">
    <property type="entry name" value="Phenylalanine--tRNA ligase beta subunit"/>
    <property type="match status" value="1"/>
</dbReference>
<dbReference type="FunFam" id="3.30.70.380:FF:000001">
    <property type="entry name" value="Phenylalanine--tRNA ligase beta subunit"/>
    <property type="match status" value="1"/>
</dbReference>
<dbReference type="FunFam" id="3.50.40.10:FF:000001">
    <property type="entry name" value="Phenylalanine--tRNA ligase beta subunit"/>
    <property type="match status" value="1"/>
</dbReference>
<dbReference type="Gene3D" id="3.30.56.10">
    <property type="match status" value="2"/>
</dbReference>
<dbReference type="Gene3D" id="3.30.930.10">
    <property type="entry name" value="Bira Bifunctional Protein, Domain 2"/>
    <property type="match status" value="1"/>
</dbReference>
<dbReference type="Gene3D" id="3.30.70.380">
    <property type="entry name" value="Ferrodoxin-fold anticodon-binding domain"/>
    <property type="match status" value="1"/>
</dbReference>
<dbReference type="Gene3D" id="2.40.50.140">
    <property type="entry name" value="Nucleic acid-binding proteins"/>
    <property type="match status" value="1"/>
</dbReference>
<dbReference type="Gene3D" id="3.50.40.10">
    <property type="entry name" value="Phenylalanyl-trna Synthetase, Chain B, domain 3"/>
    <property type="match status" value="1"/>
</dbReference>
<dbReference type="HAMAP" id="MF_00283">
    <property type="entry name" value="Phe_tRNA_synth_beta1"/>
    <property type="match status" value="1"/>
</dbReference>
<dbReference type="InterPro" id="IPR045864">
    <property type="entry name" value="aa-tRNA-synth_II/BPL/LPL"/>
</dbReference>
<dbReference type="InterPro" id="IPR005146">
    <property type="entry name" value="B3/B4_tRNA-bd"/>
</dbReference>
<dbReference type="InterPro" id="IPR009061">
    <property type="entry name" value="DNA-bd_dom_put_sf"/>
</dbReference>
<dbReference type="InterPro" id="IPR005121">
    <property type="entry name" value="Fdx_antiC-bd"/>
</dbReference>
<dbReference type="InterPro" id="IPR036690">
    <property type="entry name" value="Fdx_antiC-bd_sf"/>
</dbReference>
<dbReference type="InterPro" id="IPR012340">
    <property type="entry name" value="NA-bd_OB-fold"/>
</dbReference>
<dbReference type="InterPro" id="IPR045060">
    <property type="entry name" value="Phe-tRNA-ligase_IIc_bsu"/>
</dbReference>
<dbReference type="InterPro" id="IPR004532">
    <property type="entry name" value="Phe-tRNA-ligase_IIc_bsu_bact"/>
</dbReference>
<dbReference type="InterPro" id="IPR020825">
    <property type="entry name" value="Phe-tRNA_synthase-like_B3/B4"/>
</dbReference>
<dbReference type="InterPro" id="IPR041616">
    <property type="entry name" value="PheRS_beta_core"/>
</dbReference>
<dbReference type="InterPro" id="IPR002547">
    <property type="entry name" value="tRNA-bd_dom"/>
</dbReference>
<dbReference type="InterPro" id="IPR033714">
    <property type="entry name" value="tRNA_bind_bactPheRS"/>
</dbReference>
<dbReference type="InterPro" id="IPR005147">
    <property type="entry name" value="tRNA_synthase_B5-dom"/>
</dbReference>
<dbReference type="NCBIfam" id="TIGR00472">
    <property type="entry name" value="pheT_bact"/>
    <property type="match status" value="1"/>
</dbReference>
<dbReference type="PANTHER" id="PTHR10947:SF0">
    <property type="entry name" value="PHENYLALANINE--TRNA LIGASE BETA SUBUNIT"/>
    <property type="match status" value="1"/>
</dbReference>
<dbReference type="PANTHER" id="PTHR10947">
    <property type="entry name" value="PHENYLALANYL-TRNA SYNTHETASE BETA CHAIN AND LEUCINE-RICH REPEAT-CONTAINING PROTEIN 47"/>
    <property type="match status" value="1"/>
</dbReference>
<dbReference type="Pfam" id="PF03483">
    <property type="entry name" value="B3_4"/>
    <property type="match status" value="1"/>
</dbReference>
<dbReference type="Pfam" id="PF03484">
    <property type="entry name" value="B5"/>
    <property type="match status" value="1"/>
</dbReference>
<dbReference type="Pfam" id="PF03147">
    <property type="entry name" value="FDX-ACB"/>
    <property type="match status" value="1"/>
</dbReference>
<dbReference type="Pfam" id="PF17759">
    <property type="entry name" value="tRNA_synthFbeta"/>
    <property type="match status" value="1"/>
</dbReference>
<dbReference type="SMART" id="SM00873">
    <property type="entry name" value="B3_4"/>
    <property type="match status" value="1"/>
</dbReference>
<dbReference type="SMART" id="SM00874">
    <property type="entry name" value="B5"/>
    <property type="match status" value="1"/>
</dbReference>
<dbReference type="SMART" id="SM00896">
    <property type="entry name" value="FDX-ACB"/>
    <property type="match status" value="1"/>
</dbReference>
<dbReference type="SUPFAM" id="SSF54991">
    <property type="entry name" value="Anticodon-binding domain of PheRS"/>
    <property type="match status" value="1"/>
</dbReference>
<dbReference type="SUPFAM" id="SSF55681">
    <property type="entry name" value="Class II aaRS and biotin synthetases"/>
    <property type="match status" value="1"/>
</dbReference>
<dbReference type="SUPFAM" id="SSF50249">
    <property type="entry name" value="Nucleic acid-binding proteins"/>
    <property type="match status" value="1"/>
</dbReference>
<dbReference type="SUPFAM" id="SSF56037">
    <property type="entry name" value="PheT/TilS domain"/>
    <property type="match status" value="1"/>
</dbReference>
<dbReference type="SUPFAM" id="SSF46955">
    <property type="entry name" value="Putative DNA-binding domain"/>
    <property type="match status" value="2"/>
</dbReference>
<dbReference type="PROSITE" id="PS51483">
    <property type="entry name" value="B5"/>
    <property type="match status" value="1"/>
</dbReference>
<dbReference type="PROSITE" id="PS51447">
    <property type="entry name" value="FDX_ACB"/>
    <property type="match status" value="1"/>
</dbReference>
<dbReference type="PROSITE" id="PS50886">
    <property type="entry name" value="TRBD"/>
    <property type="match status" value="1"/>
</dbReference>
<keyword id="KW-0002">3D-structure</keyword>
<keyword id="KW-0030">Aminoacyl-tRNA synthetase</keyword>
<keyword id="KW-0067">ATP-binding</keyword>
<keyword id="KW-0963">Cytoplasm</keyword>
<keyword id="KW-0436">Ligase</keyword>
<keyword id="KW-0460">Magnesium</keyword>
<keyword id="KW-0479">Metal-binding</keyword>
<keyword id="KW-0547">Nucleotide-binding</keyword>
<keyword id="KW-0648">Protein biosynthesis</keyword>
<keyword id="KW-0694">RNA-binding</keyword>
<keyword id="KW-0820">tRNA-binding</keyword>
<protein>
    <recommendedName>
        <fullName>Phenylalanine--tRNA ligase beta subunit</fullName>
        <ecNumber>6.1.1.20</ecNumber>
    </recommendedName>
    <alternativeName>
        <fullName>Phenylalanyl-tRNA synthetase beta subunit</fullName>
        <shortName>PheRS</shortName>
    </alternativeName>
</protein>
<proteinExistence type="evidence at protein level"/>
<gene>
    <name type="primary">pheT</name>
</gene>
<feature type="chain" id="PRO_0000126978" description="Phenylalanine--tRNA ligase beta subunit">
    <location>
        <begin position="1"/>
        <end position="785"/>
    </location>
</feature>
<feature type="domain" description="tRNA-binding">
    <location>
        <begin position="39"/>
        <end position="147"/>
    </location>
</feature>
<feature type="domain" description="B5">
    <location>
        <begin position="399"/>
        <end position="474"/>
    </location>
</feature>
<feature type="domain" description="FDX-ACB">
    <location>
        <begin position="688"/>
        <end position="780"/>
    </location>
</feature>
<feature type="binding site">
    <location>
        <position position="452"/>
    </location>
    <ligand>
        <name>Mg(2+)</name>
        <dbReference type="ChEBI" id="CHEBI:18420"/>
        <note>shared with alpha subunit</note>
    </ligand>
</feature>
<feature type="binding site">
    <location>
        <position position="458"/>
    </location>
    <ligand>
        <name>Mg(2+)</name>
        <dbReference type="ChEBI" id="CHEBI:18420"/>
        <note>shared with alpha subunit</note>
    </ligand>
</feature>
<feature type="binding site">
    <location>
        <position position="461"/>
    </location>
    <ligand>
        <name>Mg(2+)</name>
        <dbReference type="ChEBI" id="CHEBI:18420"/>
        <note>shared with alpha subunit</note>
    </ligand>
</feature>
<feature type="binding site">
    <location>
        <position position="462"/>
    </location>
    <ligand>
        <name>Mg(2+)</name>
        <dbReference type="ChEBI" id="CHEBI:18420"/>
        <note>shared with alpha subunit</note>
    </ligand>
</feature>
<feature type="strand" evidence="3">
    <location>
        <begin position="2"/>
        <end position="4"/>
    </location>
</feature>
<feature type="helix" evidence="3">
    <location>
        <begin position="5"/>
        <end position="8"/>
    </location>
</feature>
<feature type="turn" evidence="3">
    <location>
        <begin position="9"/>
        <end position="11"/>
    </location>
</feature>
<feature type="helix" evidence="3">
    <location>
        <begin position="18"/>
        <end position="28"/>
    </location>
</feature>
<feature type="strand" evidence="3">
    <location>
        <begin position="34"/>
        <end position="37"/>
    </location>
</feature>
<feature type="strand" evidence="3">
    <location>
        <begin position="45"/>
        <end position="55"/>
    </location>
</feature>
<feature type="turn" evidence="2">
    <location>
        <begin position="57"/>
        <end position="60"/>
    </location>
</feature>
<feature type="strand" evidence="3">
    <location>
        <begin position="62"/>
        <end position="76"/>
    </location>
</feature>
<feature type="strand" evidence="3">
    <location>
        <begin position="86"/>
        <end position="90"/>
    </location>
</feature>
<feature type="helix" evidence="4">
    <location>
        <begin position="97"/>
        <end position="99"/>
    </location>
</feature>
<feature type="strand" evidence="4">
    <location>
        <begin position="105"/>
        <end position="108"/>
    </location>
</feature>
<feature type="strand" evidence="3">
    <location>
        <begin position="109"/>
        <end position="113"/>
    </location>
</feature>
<feature type="strand" evidence="3">
    <location>
        <begin position="115"/>
        <end position="117"/>
    </location>
</feature>
<feature type="helix" evidence="3">
    <location>
        <begin position="120"/>
        <end position="123"/>
    </location>
</feature>
<feature type="helix" evidence="3">
    <location>
        <begin position="146"/>
        <end position="148"/>
    </location>
</feature>
<feature type="strand" evidence="3">
    <location>
        <begin position="154"/>
        <end position="157"/>
    </location>
</feature>
<feature type="helix" evidence="3">
    <location>
        <begin position="165"/>
        <end position="168"/>
    </location>
</feature>
<feature type="helix" evidence="3">
    <location>
        <begin position="170"/>
        <end position="179"/>
    </location>
</feature>
<feature type="strand" evidence="3">
    <location>
        <begin position="199"/>
        <end position="205"/>
    </location>
</feature>
<feature type="turn" evidence="3">
    <location>
        <begin position="207"/>
        <end position="209"/>
    </location>
</feature>
<feature type="strand" evidence="3">
    <location>
        <begin position="211"/>
        <end position="220"/>
    </location>
</feature>
<feature type="helix" evidence="3">
    <location>
        <begin position="228"/>
        <end position="236"/>
    </location>
</feature>
<feature type="helix" evidence="3">
    <location>
        <begin position="244"/>
        <end position="255"/>
    </location>
</feature>
<feature type="strand" evidence="3">
    <location>
        <begin position="261"/>
        <end position="264"/>
    </location>
</feature>
<feature type="helix" evidence="3">
    <location>
        <begin position="265"/>
        <end position="267"/>
    </location>
</feature>
<feature type="strand" evidence="3">
    <location>
        <begin position="271"/>
        <end position="276"/>
    </location>
</feature>
<feature type="strand" evidence="3">
    <location>
        <begin position="282"/>
        <end position="285"/>
    </location>
</feature>
<feature type="strand" evidence="3">
    <location>
        <begin position="290"/>
        <end position="292"/>
    </location>
</feature>
<feature type="strand" evidence="3">
    <location>
        <begin position="298"/>
        <end position="304"/>
    </location>
</feature>
<feature type="strand" evidence="3">
    <location>
        <begin position="307"/>
        <end position="313"/>
    </location>
</feature>
<feature type="turn" evidence="3">
    <location>
        <begin position="314"/>
        <end position="316"/>
    </location>
</feature>
<feature type="strand" evidence="3">
    <location>
        <begin position="317"/>
        <end position="319"/>
    </location>
</feature>
<feature type="turn" evidence="3">
    <location>
        <begin position="320"/>
        <end position="322"/>
    </location>
</feature>
<feature type="strand" evidence="3">
    <location>
        <begin position="330"/>
        <end position="337"/>
    </location>
</feature>
<feature type="helix" evidence="3">
    <location>
        <begin position="340"/>
        <end position="349"/>
    </location>
</feature>
<feature type="helix" evidence="3">
    <location>
        <begin position="355"/>
        <end position="362"/>
    </location>
</feature>
<feature type="helix" evidence="3">
    <location>
        <begin position="369"/>
        <end position="383"/>
    </location>
</feature>
<feature type="strand" evidence="3">
    <location>
        <begin position="387"/>
        <end position="390"/>
    </location>
</feature>
<feature type="strand" evidence="3">
    <location>
        <begin position="393"/>
        <end position="395"/>
    </location>
</feature>
<feature type="strand" evidence="3">
    <location>
        <begin position="404"/>
        <end position="406"/>
    </location>
</feature>
<feature type="helix" evidence="3">
    <location>
        <begin position="408"/>
        <end position="415"/>
    </location>
</feature>
<feature type="helix" evidence="3">
    <location>
        <begin position="421"/>
        <end position="430"/>
    </location>
</feature>
<feature type="strand" evidence="3">
    <location>
        <begin position="434"/>
        <end position="445"/>
    </location>
</feature>
<feature type="helix" evidence="3">
    <location>
        <begin position="456"/>
        <end position="467"/>
    </location>
</feature>
<feature type="helix" evidence="3">
    <location>
        <begin position="469"/>
        <end position="471"/>
    </location>
</feature>
<feature type="helix" evidence="3">
    <location>
        <begin position="483"/>
        <end position="485"/>
    </location>
</feature>
<feature type="turn" evidence="4">
    <location>
        <begin position="486"/>
        <end position="489"/>
    </location>
</feature>
<feature type="helix" evidence="3">
    <location>
        <begin position="490"/>
        <end position="505"/>
    </location>
</feature>
<feature type="strand" evidence="3">
    <location>
        <begin position="514"/>
        <end position="516"/>
    </location>
</feature>
<feature type="helix" evidence="3">
    <location>
        <begin position="520"/>
        <end position="523"/>
    </location>
</feature>
<feature type="strand" evidence="3">
    <location>
        <begin position="532"/>
        <end position="535"/>
    </location>
</feature>
<feature type="strand" evidence="3">
    <location>
        <begin position="541"/>
        <end position="544"/>
    </location>
</feature>
<feature type="helix" evidence="3">
    <location>
        <begin position="549"/>
        <end position="562"/>
    </location>
</feature>
<feature type="strand" evidence="3">
    <location>
        <begin position="568"/>
        <end position="592"/>
    </location>
</feature>
<feature type="strand" evidence="3">
    <location>
        <begin position="597"/>
        <end position="600"/>
    </location>
</feature>
<feature type="helix" evidence="3">
    <location>
        <begin position="606"/>
        <end position="620"/>
    </location>
</feature>
<feature type="strand" evidence="3">
    <location>
        <begin position="625"/>
        <end position="627"/>
    </location>
</feature>
<feature type="strand" evidence="3">
    <location>
        <begin position="634"/>
        <end position="644"/>
    </location>
</feature>
<feature type="strand" evidence="3">
    <location>
        <begin position="647"/>
        <end position="655"/>
    </location>
</feature>
<feature type="helix" evidence="3">
    <location>
        <begin position="657"/>
        <end position="662"/>
    </location>
</feature>
<feature type="strand" evidence="3">
    <location>
        <begin position="669"/>
        <end position="676"/>
    </location>
</feature>
<feature type="strand" evidence="3">
    <location>
        <begin position="693"/>
        <end position="697"/>
    </location>
</feature>
<feature type="strand" evidence="3">
    <location>
        <begin position="701"/>
        <end position="705"/>
    </location>
</feature>
<feature type="helix" evidence="3">
    <location>
        <begin position="707"/>
        <end position="718"/>
    </location>
</feature>
<feature type="strand" evidence="3">
    <location>
        <begin position="722"/>
        <end position="729"/>
    </location>
</feature>
<feature type="helix" evidence="4">
    <location>
        <begin position="737"/>
        <end position="739"/>
    </location>
</feature>
<feature type="strand" evidence="3">
    <location>
        <begin position="744"/>
        <end position="749"/>
    </location>
</feature>
<feature type="strand" evidence="3">
    <location>
        <begin position="752"/>
        <end position="754"/>
    </location>
</feature>
<feature type="helix" evidence="3">
    <location>
        <begin position="758"/>
        <end position="773"/>
    </location>
</feature>
<feature type="turn" evidence="4">
    <location>
        <begin position="774"/>
        <end position="776"/>
    </location>
</feature>
<accession>P27002</accession>
<reference key="1">
    <citation type="journal article" date="1999" name="J. Mol. Biol.">
        <title>Crystal structures of phenylalanyl-tRNA synthetase complexed with phenylalanine and a phenylalanyl-adenylate analogue.</title>
        <authorList>
            <person name="Reshetnikova L."/>
            <person name="Moor N."/>
            <person name="Lavrik O."/>
            <person name="Vassylyev D.G."/>
        </authorList>
    </citation>
    <scope>X-RAY CRYSTALLOGRAPHY (2.5 ANGSTROMS)</scope>
</reference>
<sequence>MRVPFSWLKAYVPELESPEVLEERLAGLGFETDRIERVFPIPRGVVFARVLEAHPIPGTRLKRLVLDAGRTVEVVSGAENARKGIGVALALPGTELPGLGQKVGERVIQGVRSFGMALSPRELGVGEYGGGLLEFPEDALPPGTPLSEAWPEEVVLDLEVTPNRPDALGLLGLARDLHALGYALVEPEAALKAEALPLPFALKVEDPEGAPHFTLGYAFGLRVAPSPLWMQRALFAAGMRPINNVVDVTNYVMLERAQPMHAFDLRFVGEGIAVRRAREGERLKTLDGVERTLHPEDLVIAGWRGEESFPLGLAGVMGGAESEVREDTEAIALEVACFDPVSIRKTARRHGLRTEASHRFERGVDPLGQVPAQRRALSLLQALAGARVAEALLEAGSPKPPEAIPFRPEYANRLLGTSYPEAEQIAILKRLGCRVEGEGPTYRVTPPSHRLDLRLEEDLVEEVARIQGYETIPLALPAFFPAPDNRGVEAPYRKEQRLREVLSGLGFQEVYTYSFMDPEDARRFRLDPPRLLLLNPLAPEKAALRTHLFPGLVRVLKENLDLDRPERALLFEVGRVFREREETHLAGLLFGEGVGLPWAKERLSGYFLLKGYLEALFARLGLAFRVEAQAFPFLHPGVSGRVLVEGEEVGFLGALHPEIAQELELPPVHLFELRLPLPDKPLAFQDPSRHPAAFRDLAVVVPAPTPYGEVEALVREAAGPYLESLALFDLYQGPPLPEGHKSLAFHLRFRHPKRTLRDEEVEEAVSRVAEALRARGFGLRGLDTP</sequence>
<name>SYFB_THETH</name>